<accession>Q27177</accession>
<accession>Q3SEJ8</accession>
<sequence>MARRGQQPPPQQAPPAQKNQPGKFNPAEFVKPGLTEEEVLEIKEAFDLFDTDGTQSIDPKELKAAMTSLGFEAKNQTIYQMISDLDTDGSGQIDFAEFLKLMTARISERDSKADIQKVFNLFDSERAGVVTLKDLRKVAKELGETMDDSELQEMIDRADSDGDAQVTFEDFYNIMTKKTFA</sequence>
<organism>
    <name type="scientific">Paramecium tetraurelia</name>
    <dbReference type="NCBI Taxonomy" id="5888"/>
    <lineage>
        <taxon>Eukaryota</taxon>
        <taxon>Sar</taxon>
        <taxon>Alveolata</taxon>
        <taxon>Ciliophora</taxon>
        <taxon>Intramacronucleata</taxon>
        <taxon>Oligohymenophorea</taxon>
        <taxon>Peniculida</taxon>
        <taxon>Parameciidae</taxon>
        <taxon>Paramecium</taxon>
    </lineage>
</organism>
<protein>
    <recommendedName>
        <fullName>Caltractin ICL1a</fullName>
    </recommendedName>
    <alternativeName>
        <fullName>Centrin-1</fullName>
    </alternativeName>
</protein>
<feature type="chain" id="PRO_0000073567" description="Caltractin ICL1a">
    <location>
        <begin position="1"/>
        <end position="181"/>
    </location>
</feature>
<feature type="domain" description="EF-hand 1" evidence="2">
    <location>
        <begin position="37"/>
        <end position="72"/>
    </location>
</feature>
<feature type="domain" description="EF-hand 2" evidence="2">
    <location>
        <begin position="73"/>
        <end position="108"/>
    </location>
</feature>
<feature type="domain" description="EF-hand 3" evidence="2">
    <location>
        <begin position="110"/>
        <end position="145"/>
    </location>
</feature>
<feature type="domain" description="EF-hand 4" evidence="2">
    <location>
        <begin position="146"/>
        <end position="181"/>
    </location>
</feature>
<feature type="region of interest" description="Disordered" evidence="3">
    <location>
        <begin position="1"/>
        <end position="29"/>
    </location>
</feature>
<feature type="compositionally biased region" description="Low complexity" evidence="3">
    <location>
        <begin position="14"/>
        <end position="23"/>
    </location>
</feature>
<feature type="binding site" evidence="2">
    <location>
        <position position="50"/>
    </location>
    <ligand>
        <name>Ca(2+)</name>
        <dbReference type="ChEBI" id="CHEBI:29108"/>
        <label>1</label>
    </ligand>
</feature>
<feature type="binding site" evidence="2">
    <location>
        <position position="52"/>
    </location>
    <ligand>
        <name>Ca(2+)</name>
        <dbReference type="ChEBI" id="CHEBI:29108"/>
        <label>1</label>
    </ligand>
</feature>
<feature type="binding site" evidence="2">
    <location>
        <position position="54"/>
    </location>
    <ligand>
        <name>Ca(2+)</name>
        <dbReference type="ChEBI" id="CHEBI:29108"/>
        <label>1</label>
    </ligand>
</feature>
<feature type="binding site" evidence="2">
    <location>
        <position position="56"/>
    </location>
    <ligand>
        <name>Ca(2+)</name>
        <dbReference type="ChEBI" id="CHEBI:29108"/>
        <label>1</label>
    </ligand>
</feature>
<feature type="binding site" evidence="2">
    <location>
        <position position="61"/>
    </location>
    <ligand>
        <name>Ca(2+)</name>
        <dbReference type="ChEBI" id="CHEBI:29108"/>
        <label>1</label>
    </ligand>
</feature>
<feature type="binding site" evidence="2">
    <location>
        <position position="86"/>
    </location>
    <ligand>
        <name>Ca(2+)</name>
        <dbReference type="ChEBI" id="CHEBI:29108"/>
        <label>2</label>
    </ligand>
</feature>
<feature type="binding site" evidence="2">
    <location>
        <position position="88"/>
    </location>
    <ligand>
        <name>Ca(2+)</name>
        <dbReference type="ChEBI" id="CHEBI:29108"/>
        <label>2</label>
    </ligand>
</feature>
<feature type="binding site" evidence="2">
    <location>
        <position position="90"/>
    </location>
    <ligand>
        <name>Ca(2+)</name>
        <dbReference type="ChEBI" id="CHEBI:29108"/>
        <label>2</label>
    </ligand>
</feature>
<feature type="binding site" evidence="2">
    <location>
        <position position="92"/>
    </location>
    <ligand>
        <name>Ca(2+)</name>
        <dbReference type="ChEBI" id="CHEBI:29108"/>
        <label>2</label>
    </ligand>
</feature>
<feature type="binding site" evidence="2">
    <location>
        <position position="97"/>
    </location>
    <ligand>
        <name>Ca(2+)</name>
        <dbReference type="ChEBI" id="CHEBI:29108"/>
        <label>2</label>
    </ligand>
</feature>
<feature type="sequence conflict" description="In Ref. 1; AAC47156." evidence="4" ref="1">
    <original>P</original>
    <variation>T</variation>
    <location>
        <position position="21"/>
    </location>
</feature>
<reference key="1">
    <citation type="journal article" date="1996" name="Eur. J. Biochem.">
        <title>Characterization of centrin genes in Paramecium.</title>
        <authorList>
            <person name="Madeddu L."/>
            <person name="Klotz C."/>
            <person name="Le Caer J.-P."/>
            <person name="Beisson J."/>
        </authorList>
    </citation>
    <scope>NUCLEOTIDE SEQUENCE [GENOMIC DNA]</scope>
    <scope>PROTEIN SEQUENCE OF 6-19; 25-33; 50-59 AND 65-73</scope>
    <source>
        <strain>Stock d4-2</strain>
    </source>
</reference>
<reference key="2">
    <citation type="submission" date="2005-09" db="EMBL/GenBank/DDBJ databases">
        <title>Paramecium tetraurelia centrin-related protein genes.</title>
        <authorList>
            <person name="Klotz C."/>
        </authorList>
    </citation>
    <scope>NUCLEOTIDE SEQUENCE [GENOMIC DNA]</scope>
    <source>
        <strain>Stock d4-2</strain>
    </source>
</reference>
<reference key="3">
    <citation type="journal article" date="2006" name="Nature">
        <title>Global trends of whole-genome duplications revealed by the ciliate Paramecium tetraurelia.</title>
        <authorList>
            <person name="Aury J.-M."/>
            <person name="Jaillon O."/>
            <person name="Duret L."/>
            <person name="Noel B."/>
            <person name="Jubin C."/>
            <person name="Porcel B.M."/>
            <person name="Segurens B."/>
            <person name="Daubin V."/>
            <person name="Anthouard V."/>
            <person name="Aiach N."/>
            <person name="Arnaiz O."/>
            <person name="Billaut A."/>
            <person name="Beisson J."/>
            <person name="Blanc I."/>
            <person name="Bouhouche K."/>
            <person name="Camara F."/>
            <person name="Duharcourt S."/>
            <person name="Guigo R."/>
            <person name="Gogendeau D."/>
            <person name="Katinka M."/>
            <person name="Keller A.-M."/>
            <person name="Kissmehl R."/>
            <person name="Klotz C."/>
            <person name="Koll F."/>
            <person name="Le Mouel A."/>
            <person name="Lepere G."/>
            <person name="Malinsky S."/>
            <person name="Nowacki M."/>
            <person name="Nowak J.K."/>
            <person name="Plattner H."/>
            <person name="Poulain J."/>
            <person name="Ruiz F."/>
            <person name="Serrano V."/>
            <person name="Zagulski M."/>
            <person name="Dessen P."/>
            <person name="Betermier M."/>
            <person name="Weissenbach J."/>
            <person name="Scarpelli C."/>
            <person name="Schaechter V."/>
            <person name="Sperling L."/>
            <person name="Meyer E."/>
            <person name="Cohen J."/>
            <person name="Wincker P."/>
        </authorList>
    </citation>
    <scope>NUCLEOTIDE SEQUENCE [LARGE SCALE GENOMIC DNA]</scope>
    <source>
        <strain>Stock d4-2</strain>
    </source>
</reference>
<gene>
    <name type="primary">Icl1a</name>
    <name type="ORF">GSPATT00025439001</name>
</gene>
<comment type="function">
    <text>Plays a fundamental role in microtubule organizing center structure and function. Component of the infraciliary lattice (ICL) and the ciliary basal bodies.</text>
</comment>
<comment type="subunit">
    <text evidence="1">Monomer.</text>
</comment>
<comment type="subcellular location">
    <subcellularLocation>
        <location>Cytoplasm</location>
        <location>Cytoskeleton</location>
    </subcellularLocation>
    <text>ICL, innermost fibrous network of the cortical cytoskeleton.</text>
</comment>
<comment type="similarity">
    <text evidence="4">Belongs to the centrin family.</text>
</comment>
<keyword id="KW-0106">Calcium</keyword>
<keyword id="KW-0963">Cytoplasm</keyword>
<keyword id="KW-0206">Cytoskeleton</keyword>
<keyword id="KW-0903">Direct protein sequencing</keyword>
<keyword id="KW-0479">Metal-binding</keyword>
<keyword id="KW-1185">Reference proteome</keyword>
<keyword id="KW-0677">Repeat</keyword>
<dbReference type="EMBL" id="U35344">
    <property type="protein sequence ID" value="AAC47156.1"/>
    <property type="molecule type" value="Genomic_DNA"/>
</dbReference>
<dbReference type="EMBL" id="CR932086">
    <property type="protein sequence ID" value="CAI38926.1"/>
    <property type="molecule type" value="Genomic_DNA"/>
</dbReference>
<dbReference type="EMBL" id="CT868669">
    <property type="protein sequence ID" value="CAK92705.1"/>
    <property type="molecule type" value="Genomic_DNA"/>
</dbReference>
<dbReference type="PIR" id="S71317">
    <property type="entry name" value="S71317"/>
</dbReference>
<dbReference type="RefSeq" id="XP_001460102.1">
    <property type="nucleotide sequence ID" value="XM_001460065.1"/>
</dbReference>
<dbReference type="SMR" id="Q27177"/>
<dbReference type="STRING" id="5888.Q27177"/>
<dbReference type="EnsemblProtists" id="CAK92705">
    <property type="protein sequence ID" value="CAK92705"/>
    <property type="gene ID" value="GSPATT00025439001"/>
</dbReference>
<dbReference type="GeneID" id="5045887"/>
<dbReference type="KEGG" id="ptm:GSPATT00025439001"/>
<dbReference type="eggNOG" id="KOG0028">
    <property type="taxonomic scope" value="Eukaryota"/>
</dbReference>
<dbReference type="HOGENOM" id="CLU_061288_18_2_1"/>
<dbReference type="InParanoid" id="Q27177"/>
<dbReference type="OMA" id="DMIDCAD"/>
<dbReference type="OrthoDB" id="410571at2759"/>
<dbReference type="Proteomes" id="UP000000600">
    <property type="component" value="Partially assembled WGS sequence"/>
</dbReference>
<dbReference type="GO" id="GO:0005737">
    <property type="term" value="C:cytoplasm"/>
    <property type="evidence" value="ECO:0007669"/>
    <property type="project" value="UniProtKB-KW"/>
</dbReference>
<dbReference type="GO" id="GO:0005856">
    <property type="term" value="C:cytoskeleton"/>
    <property type="evidence" value="ECO:0007669"/>
    <property type="project" value="UniProtKB-SubCell"/>
</dbReference>
<dbReference type="GO" id="GO:0005509">
    <property type="term" value="F:calcium ion binding"/>
    <property type="evidence" value="ECO:0007669"/>
    <property type="project" value="InterPro"/>
</dbReference>
<dbReference type="CDD" id="cd00051">
    <property type="entry name" value="EFh"/>
    <property type="match status" value="1"/>
</dbReference>
<dbReference type="FunFam" id="1.10.238.10:FF:000178">
    <property type="entry name" value="Calmodulin-2 A"/>
    <property type="match status" value="1"/>
</dbReference>
<dbReference type="Gene3D" id="1.10.238.10">
    <property type="entry name" value="EF-hand"/>
    <property type="match status" value="2"/>
</dbReference>
<dbReference type="InterPro" id="IPR050230">
    <property type="entry name" value="CALM/Myosin/TropC-like"/>
</dbReference>
<dbReference type="InterPro" id="IPR011992">
    <property type="entry name" value="EF-hand-dom_pair"/>
</dbReference>
<dbReference type="InterPro" id="IPR018247">
    <property type="entry name" value="EF_Hand_1_Ca_BS"/>
</dbReference>
<dbReference type="InterPro" id="IPR002048">
    <property type="entry name" value="EF_hand_dom"/>
</dbReference>
<dbReference type="PANTHER" id="PTHR23048:SF59">
    <property type="entry name" value="EF-HAND SUPERFAMILY PROTEIN"/>
    <property type="match status" value="1"/>
</dbReference>
<dbReference type="PANTHER" id="PTHR23048">
    <property type="entry name" value="MYOSIN LIGHT CHAIN 1, 3"/>
    <property type="match status" value="1"/>
</dbReference>
<dbReference type="Pfam" id="PF13499">
    <property type="entry name" value="EF-hand_7"/>
    <property type="match status" value="2"/>
</dbReference>
<dbReference type="SMART" id="SM00054">
    <property type="entry name" value="EFh"/>
    <property type="match status" value="4"/>
</dbReference>
<dbReference type="SUPFAM" id="SSF47473">
    <property type="entry name" value="EF-hand"/>
    <property type="match status" value="1"/>
</dbReference>
<dbReference type="PROSITE" id="PS00018">
    <property type="entry name" value="EF_HAND_1"/>
    <property type="match status" value="2"/>
</dbReference>
<dbReference type="PROSITE" id="PS50222">
    <property type="entry name" value="EF_HAND_2"/>
    <property type="match status" value="4"/>
</dbReference>
<evidence type="ECO:0000250" key="1"/>
<evidence type="ECO:0000255" key="2">
    <source>
        <dbReference type="PROSITE-ProRule" id="PRU00448"/>
    </source>
</evidence>
<evidence type="ECO:0000256" key="3">
    <source>
        <dbReference type="SAM" id="MobiDB-lite"/>
    </source>
</evidence>
<evidence type="ECO:0000305" key="4"/>
<proteinExistence type="evidence at protein level"/>
<name>CATR1_PARTE</name>